<comment type="subunit">
    <text evidence="1">Part of the 30S ribosomal subunit.</text>
</comment>
<comment type="subcellular location">
    <subcellularLocation>
        <location>Plastid</location>
        <location>Chloroplast</location>
    </subcellularLocation>
</comment>
<comment type="similarity">
    <text evidence="1">Belongs to the universal ribosomal protein uS11 family.</text>
</comment>
<sequence length="138" mass="14930">MTKSIPRIGSRRGGRIASRKNARRIPKGVIHVQASFNNTIVTVTDVTGRVVSWSSAGTCGFRGTRRGTPFAAQTAAANAIRTVIDQGMQRAEVMIKGPGLGRDAALRAIRRSGILLSFVRDVTPMPHNGCRPPKKRRV</sequence>
<name>RR11_CALFG</name>
<evidence type="ECO:0000255" key="1">
    <source>
        <dbReference type="HAMAP-Rule" id="MF_01310"/>
    </source>
</evidence>
<evidence type="ECO:0000256" key="2">
    <source>
        <dbReference type="SAM" id="MobiDB-lite"/>
    </source>
</evidence>
<evidence type="ECO:0000305" key="3"/>
<dbReference type="EMBL" id="AJ428413">
    <property type="protein sequence ID" value="CAD28753.1"/>
    <property type="molecule type" value="Genomic_DNA"/>
</dbReference>
<dbReference type="RefSeq" id="NP_862786.1">
    <property type="nucleotide sequence ID" value="NC_004993.1"/>
</dbReference>
<dbReference type="SMR" id="Q7YJU5"/>
<dbReference type="GeneID" id="2598035"/>
<dbReference type="GO" id="GO:0009507">
    <property type="term" value="C:chloroplast"/>
    <property type="evidence" value="ECO:0007669"/>
    <property type="project" value="UniProtKB-SubCell"/>
</dbReference>
<dbReference type="GO" id="GO:1990904">
    <property type="term" value="C:ribonucleoprotein complex"/>
    <property type="evidence" value="ECO:0007669"/>
    <property type="project" value="UniProtKB-KW"/>
</dbReference>
<dbReference type="GO" id="GO:0005840">
    <property type="term" value="C:ribosome"/>
    <property type="evidence" value="ECO:0007669"/>
    <property type="project" value="UniProtKB-KW"/>
</dbReference>
<dbReference type="GO" id="GO:0019843">
    <property type="term" value="F:rRNA binding"/>
    <property type="evidence" value="ECO:0007669"/>
    <property type="project" value="UniProtKB-UniRule"/>
</dbReference>
<dbReference type="GO" id="GO:0003735">
    <property type="term" value="F:structural constituent of ribosome"/>
    <property type="evidence" value="ECO:0007669"/>
    <property type="project" value="InterPro"/>
</dbReference>
<dbReference type="GO" id="GO:0006412">
    <property type="term" value="P:translation"/>
    <property type="evidence" value="ECO:0007669"/>
    <property type="project" value="UniProtKB-UniRule"/>
</dbReference>
<dbReference type="FunFam" id="3.30.420.80:FF:000003">
    <property type="entry name" value="30S ribosomal protein S11, chloroplastic"/>
    <property type="match status" value="1"/>
</dbReference>
<dbReference type="Gene3D" id="3.30.420.80">
    <property type="entry name" value="Ribosomal protein S11"/>
    <property type="match status" value="1"/>
</dbReference>
<dbReference type="HAMAP" id="MF_01310">
    <property type="entry name" value="Ribosomal_uS11"/>
    <property type="match status" value="1"/>
</dbReference>
<dbReference type="InterPro" id="IPR001971">
    <property type="entry name" value="Ribosomal_uS11"/>
</dbReference>
<dbReference type="InterPro" id="IPR019981">
    <property type="entry name" value="Ribosomal_uS11_bac-type"/>
</dbReference>
<dbReference type="InterPro" id="IPR018102">
    <property type="entry name" value="Ribosomal_uS11_CS"/>
</dbReference>
<dbReference type="InterPro" id="IPR036967">
    <property type="entry name" value="Ribosomal_uS11_sf"/>
</dbReference>
<dbReference type="NCBIfam" id="NF003698">
    <property type="entry name" value="PRK05309.1"/>
    <property type="match status" value="1"/>
</dbReference>
<dbReference type="NCBIfam" id="TIGR03632">
    <property type="entry name" value="uS11_bact"/>
    <property type="match status" value="1"/>
</dbReference>
<dbReference type="PANTHER" id="PTHR11759">
    <property type="entry name" value="40S RIBOSOMAL PROTEIN S14/30S RIBOSOMAL PROTEIN S11"/>
    <property type="match status" value="1"/>
</dbReference>
<dbReference type="Pfam" id="PF00411">
    <property type="entry name" value="Ribosomal_S11"/>
    <property type="match status" value="1"/>
</dbReference>
<dbReference type="PIRSF" id="PIRSF002131">
    <property type="entry name" value="Ribosomal_S11"/>
    <property type="match status" value="1"/>
</dbReference>
<dbReference type="SUPFAM" id="SSF53137">
    <property type="entry name" value="Translational machinery components"/>
    <property type="match status" value="1"/>
</dbReference>
<dbReference type="PROSITE" id="PS00054">
    <property type="entry name" value="RIBOSOMAL_S11"/>
    <property type="match status" value="1"/>
</dbReference>
<gene>
    <name evidence="1" type="primary">rps11</name>
</gene>
<proteinExistence type="inferred from homology"/>
<accession>Q7YJU5</accession>
<feature type="chain" id="PRO_0000123293" description="Small ribosomal subunit protein uS11c">
    <location>
        <begin position="1"/>
        <end position="138"/>
    </location>
</feature>
<feature type="region of interest" description="Disordered" evidence="2">
    <location>
        <begin position="1"/>
        <end position="21"/>
    </location>
</feature>
<feature type="compositionally biased region" description="Basic residues" evidence="2">
    <location>
        <begin position="9"/>
        <end position="21"/>
    </location>
</feature>
<geneLocation type="chloroplast"/>
<reference key="1">
    <citation type="journal article" date="2003" name="Plant Syst. Evol.">
        <title>The chloroplast genome of the 'basal' angiosperm Calycanthus fertilis -- structural and phylogenetic analyses.</title>
        <authorList>
            <person name="Goremykin V."/>
            <person name="Hirsch-Ernst K.I."/>
            <person name="Woelfl S."/>
            <person name="Hellwig F.H."/>
        </authorList>
    </citation>
    <scope>NUCLEOTIDE SEQUENCE [LARGE SCALE GENOMIC DNA]</scope>
</reference>
<keyword id="KW-0150">Chloroplast</keyword>
<keyword id="KW-0934">Plastid</keyword>
<keyword id="KW-0687">Ribonucleoprotein</keyword>
<keyword id="KW-0689">Ribosomal protein</keyword>
<keyword id="KW-0694">RNA-binding</keyword>
<keyword id="KW-0699">rRNA-binding</keyword>
<protein>
    <recommendedName>
        <fullName evidence="1">Small ribosomal subunit protein uS11c</fullName>
    </recommendedName>
    <alternativeName>
        <fullName evidence="3">30S ribosomal protein S11, chloroplastic</fullName>
    </alternativeName>
</protein>
<organism>
    <name type="scientific">Calycanthus floridus var. glaucus</name>
    <name type="common">Eastern sweetshrub</name>
    <name type="synonym">Calycanthus fertilis var. ferax</name>
    <dbReference type="NCBI Taxonomy" id="212734"/>
    <lineage>
        <taxon>Eukaryota</taxon>
        <taxon>Viridiplantae</taxon>
        <taxon>Streptophyta</taxon>
        <taxon>Embryophyta</taxon>
        <taxon>Tracheophyta</taxon>
        <taxon>Spermatophyta</taxon>
        <taxon>Magnoliopsida</taxon>
        <taxon>Magnoliidae</taxon>
        <taxon>Laurales</taxon>
        <taxon>Calycanthaceae</taxon>
        <taxon>Calycanthus</taxon>
    </lineage>
</organism>